<dbReference type="EMBL" id="CP001063">
    <property type="protein sequence ID" value="ACD07353.1"/>
    <property type="molecule type" value="Genomic_DNA"/>
</dbReference>
<dbReference type="RefSeq" id="WP_001040205.1">
    <property type="nucleotide sequence ID" value="NC_010658.1"/>
</dbReference>
<dbReference type="SMR" id="B2U208"/>
<dbReference type="STRING" id="344609.SbBS512_E3604"/>
<dbReference type="GeneID" id="93778816"/>
<dbReference type="KEGG" id="sbc:SbBS512_E3604"/>
<dbReference type="HOGENOM" id="CLU_089475_5_0_6"/>
<dbReference type="Proteomes" id="UP000001030">
    <property type="component" value="Chromosome"/>
</dbReference>
<dbReference type="GO" id="GO:0005829">
    <property type="term" value="C:cytosol"/>
    <property type="evidence" value="ECO:0007669"/>
    <property type="project" value="TreeGrafter"/>
</dbReference>
<dbReference type="GO" id="GO:0043024">
    <property type="term" value="F:ribosomal small subunit binding"/>
    <property type="evidence" value="ECO:0007669"/>
    <property type="project" value="TreeGrafter"/>
</dbReference>
<dbReference type="GO" id="GO:0030490">
    <property type="term" value="P:maturation of SSU-rRNA"/>
    <property type="evidence" value="ECO:0007669"/>
    <property type="project" value="UniProtKB-UniRule"/>
</dbReference>
<dbReference type="FunFam" id="3.30.300.20:FF:000007">
    <property type="entry name" value="Ribosome-binding factor A"/>
    <property type="match status" value="1"/>
</dbReference>
<dbReference type="Gene3D" id="3.30.300.20">
    <property type="match status" value="1"/>
</dbReference>
<dbReference type="HAMAP" id="MF_00003">
    <property type="entry name" value="RbfA"/>
    <property type="match status" value="1"/>
</dbReference>
<dbReference type="InterPro" id="IPR015946">
    <property type="entry name" value="KH_dom-like_a/b"/>
</dbReference>
<dbReference type="InterPro" id="IPR000238">
    <property type="entry name" value="RbfA"/>
</dbReference>
<dbReference type="InterPro" id="IPR023799">
    <property type="entry name" value="RbfA_dom_sf"/>
</dbReference>
<dbReference type="InterPro" id="IPR020053">
    <property type="entry name" value="Ribosome-bd_factorA_CS"/>
</dbReference>
<dbReference type="NCBIfam" id="TIGR00082">
    <property type="entry name" value="rbfA"/>
    <property type="match status" value="1"/>
</dbReference>
<dbReference type="PANTHER" id="PTHR33515">
    <property type="entry name" value="RIBOSOME-BINDING FACTOR A, CHLOROPLASTIC-RELATED"/>
    <property type="match status" value="1"/>
</dbReference>
<dbReference type="PANTHER" id="PTHR33515:SF1">
    <property type="entry name" value="RIBOSOME-BINDING FACTOR A, CHLOROPLASTIC-RELATED"/>
    <property type="match status" value="1"/>
</dbReference>
<dbReference type="Pfam" id="PF02033">
    <property type="entry name" value="RBFA"/>
    <property type="match status" value="1"/>
</dbReference>
<dbReference type="SUPFAM" id="SSF89919">
    <property type="entry name" value="Ribosome-binding factor A, RbfA"/>
    <property type="match status" value="1"/>
</dbReference>
<dbReference type="PROSITE" id="PS01319">
    <property type="entry name" value="RBFA"/>
    <property type="match status" value="1"/>
</dbReference>
<comment type="function">
    <text evidence="1">One of several proteins that assist in the late maturation steps of the functional core of the 30S ribosomal subunit. Associates with free 30S ribosomal subunits (but not with 30S subunits that are part of 70S ribosomes or polysomes). Required for efficient processing of 16S rRNA. May interact with the 5'-terminal helix region of 16S rRNA.</text>
</comment>
<comment type="subunit">
    <text evidence="1">Monomer. Binds 30S ribosomal subunits, but not 50S ribosomal subunits or 70S ribosomes.</text>
</comment>
<comment type="subcellular location">
    <subcellularLocation>
        <location evidence="1">Cytoplasm</location>
    </subcellularLocation>
</comment>
<comment type="similarity">
    <text evidence="1">Belongs to the RbfA family.</text>
</comment>
<reference key="1">
    <citation type="submission" date="2008-05" db="EMBL/GenBank/DDBJ databases">
        <title>Complete sequence of Shigella boydii serotype 18 strain BS512.</title>
        <authorList>
            <person name="Rasko D.A."/>
            <person name="Rosovitz M."/>
            <person name="Maurelli A.T."/>
            <person name="Myers G."/>
            <person name="Seshadri R."/>
            <person name="Cer R."/>
            <person name="Jiang L."/>
            <person name="Ravel J."/>
            <person name="Sebastian Y."/>
        </authorList>
    </citation>
    <scope>NUCLEOTIDE SEQUENCE [LARGE SCALE GENOMIC DNA]</scope>
    <source>
        <strain>CDC 3083-94 / BS512</strain>
    </source>
</reference>
<evidence type="ECO:0000255" key="1">
    <source>
        <dbReference type="HAMAP-Rule" id="MF_00003"/>
    </source>
</evidence>
<accession>B2U208</accession>
<keyword id="KW-0963">Cytoplasm</keyword>
<keyword id="KW-1185">Reference proteome</keyword>
<keyword id="KW-0690">Ribosome biogenesis</keyword>
<organism>
    <name type="scientific">Shigella boydii serotype 18 (strain CDC 3083-94 / BS512)</name>
    <dbReference type="NCBI Taxonomy" id="344609"/>
    <lineage>
        <taxon>Bacteria</taxon>
        <taxon>Pseudomonadati</taxon>
        <taxon>Pseudomonadota</taxon>
        <taxon>Gammaproteobacteria</taxon>
        <taxon>Enterobacterales</taxon>
        <taxon>Enterobacteriaceae</taxon>
        <taxon>Shigella</taxon>
    </lineage>
</organism>
<feature type="chain" id="PRO_1000088932" description="Ribosome-binding factor A">
    <location>
        <begin position="1"/>
        <end position="133"/>
    </location>
</feature>
<proteinExistence type="inferred from homology"/>
<name>RBFA_SHIB3</name>
<gene>
    <name evidence="1" type="primary">rbfA</name>
    <name type="ordered locus">SbBS512_E3604</name>
</gene>
<sequence length="133" mass="15154">MAKEFGRPQRVAQEMQKEIALILQREIKDPRLGMMTTVSGVEMSRDLAYAKVYVTFLNDKDEDAVKAGIKALQEASGFIRSLLGKAMRLRIVPELTFFYDNSLVEGMRMSNLVTSVVKHDEERRVNPDDSKED</sequence>
<protein>
    <recommendedName>
        <fullName evidence="1">Ribosome-binding factor A</fullName>
    </recommendedName>
</protein>